<reference key="1">
    <citation type="journal article" date="1998" name="Mol. Biol. Cell">
        <title>Endobrevin, a novel synaptobrevin/VAMP-like protein preferentially associated with the early endosome.</title>
        <authorList>
            <person name="Wong S.H."/>
            <person name="Zhang T."/>
            <person name="Xu Y."/>
            <person name="Subramaniam V.N."/>
            <person name="Griffiths G."/>
            <person name="Hong W."/>
        </authorList>
    </citation>
    <scope>NUCLEOTIDE SEQUENCE [MRNA]</scope>
    <scope>SUBCELLULAR LOCATION</scope>
</reference>
<reference key="2">
    <citation type="submission" date="2003-05" db="EMBL/GenBank/DDBJ databases">
        <title>Cloning of human full-length CDSs in BD Creator(TM) system donor vector.</title>
        <authorList>
            <person name="Kalnine N."/>
            <person name="Chen X."/>
            <person name="Rolfs A."/>
            <person name="Halleck A."/>
            <person name="Hines L."/>
            <person name="Eisenstein S."/>
            <person name="Koundinya M."/>
            <person name="Raphael J."/>
            <person name="Moreira D."/>
            <person name="Kelley T."/>
            <person name="LaBaer J."/>
            <person name="Lin Y."/>
            <person name="Phelan M."/>
            <person name="Farmer A."/>
        </authorList>
    </citation>
    <scope>NUCLEOTIDE SEQUENCE [LARGE SCALE MRNA]</scope>
</reference>
<reference key="3">
    <citation type="submission" date="2004-06" db="EMBL/GenBank/DDBJ databases">
        <title>Cloning of human full open reading frames in Gateway(TM) system entry vector (pDONR201).</title>
        <authorList>
            <person name="Ebert L."/>
            <person name="Schick M."/>
            <person name="Neubert P."/>
            <person name="Schatten R."/>
            <person name="Henze S."/>
            <person name="Korn B."/>
        </authorList>
    </citation>
    <scope>NUCLEOTIDE SEQUENCE [LARGE SCALE MRNA]</scope>
</reference>
<reference key="4">
    <citation type="journal article" date="2005" name="Nature">
        <title>Generation and annotation of the DNA sequences of human chromosomes 2 and 4.</title>
        <authorList>
            <person name="Hillier L.W."/>
            <person name="Graves T.A."/>
            <person name="Fulton R.S."/>
            <person name="Fulton L.A."/>
            <person name="Pepin K.H."/>
            <person name="Minx P."/>
            <person name="Wagner-McPherson C."/>
            <person name="Layman D."/>
            <person name="Wylie K."/>
            <person name="Sekhon M."/>
            <person name="Becker M.C."/>
            <person name="Fewell G.A."/>
            <person name="Delehaunty K.D."/>
            <person name="Miner T.L."/>
            <person name="Nash W.E."/>
            <person name="Kremitzki C."/>
            <person name="Oddy L."/>
            <person name="Du H."/>
            <person name="Sun H."/>
            <person name="Bradshaw-Cordum H."/>
            <person name="Ali J."/>
            <person name="Carter J."/>
            <person name="Cordes M."/>
            <person name="Harris A."/>
            <person name="Isak A."/>
            <person name="van Brunt A."/>
            <person name="Nguyen C."/>
            <person name="Du F."/>
            <person name="Courtney L."/>
            <person name="Kalicki J."/>
            <person name="Ozersky P."/>
            <person name="Abbott S."/>
            <person name="Armstrong J."/>
            <person name="Belter E.A."/>
            <person name="Caruso L."/>
            <person name="Cedroni M."/>
            <person name="Cotton M."/>
            <person name="Davidson T."/>
            <person name="Desai A."/>
            <person name="Elliott G."/>
            <person name="Erb T."/>
            <person name="Fronick C."/>
            <person name="Gaige T."/>
            <person name="Haakenson W."/>
            <person name="Haglund K."/>
            <person name="Holmes A."/>
            <person name="Harkins R."/>
            <person name="Kim K."/>
            <person name="Kruchowski S.S."/>
            <person name="Strong C.M."/>
            <person name="Grewal N."/>
            <person name="Goyea E."/>
            <person name="Hou S."/>
            <person name="Levy A."/>
            <person name="Martinka S."/>
            <person name="Mead K."/>
            <person name="McLellan M.D."/>
            <person name="Meyer R."/>
            <person name="Randall-Maher J."/>
            <person name="Tomlinson C."/>
            <person name="Dauphin-Kohlberg S."/>
            <person name="Kozlowicz-Reilly A."/>
            <person name="Shah N."/>
            <person name="Swearengen-Shahid S."/>
            <person name="Snider J."/>
            <person name="Strong J.T."/>
            <person name="Thompson J."/>
            <person name="Yoakum M."/>
            <person name="Leonard S."/>
            <person name="Pearman C."/>
            <person name="Trani L."/>
            <person name="Radionenko M."/>
            <person name="Waligorski J.E."/>
            <person name="Wang C."/>
            <person name="Rock S.M."/>
            <person name="Tin-Wollam A.-M."/>
            <person name="Maupin R."/>
            <person name="Latreille P."/>
            <person name="Wendl M.C."/>
            <person name="Yang S.-P."/>
            <person name="Pohl C."/>
            <person name="Wallis J.W."/>
            <person name="Spieth J."/>
            <person name="Bieri T.A."/>
            <person name="Berkowicz N."/>
            <person name="Nelson J.O."/>
            <person name="Osborne J."/>
            <person name="Ding L."/>
            <person name="Meyer R."/>
            <person name="Sabo A."/>
            <person name="Shotland Y."/>
            <person name="Sinha P."/>
            <person name="Wohldmann P.E."/>
            <person name="Cook L.L."/>
            <person name="Hickenbotham M.T."/>
            <person name="Eldred J."/>
            <person name="Williams D."/>
            <person name="Jones T.A."/>
            <person name="She X."/>
            <person name="Ciccarelli F.D."/>
            <person name="Izaurralde E."/>
            <person name="Taylor J."/>
            <person name="Schmutz J."/>
            <person name="Myers R.M."/>
            <person name="Cox D.R."/>
            <person name="Huang X."/>
            <person name="McPherson J.D."/>
            <person name="Mardis E.R."/>
            <person name="Clifton S.W."/>
            <person name="Warren W.C."/>
            <person name="Chinwalla A.T."/>
            <person name="Eddy S.R."/>
            <person name="Marra M.A."/>
            <person name="Ovcharenko I."/>
            <person name="Furey T.S."/>
            <person name="Miller W."/>
            <person name="Eichler E.E."/>
            <person name="Bork P."/>
            <person name="Suyama M."/>
            <person name="Torrents D."/>
            <person name="Waterston R.H."/>
            <person name="Wilson R.K."/>
        </authorList>
    </citation>
    <scope>NUCLEOTIDE SEQUENCE [LARGE SCALE GENOMIC DNA]</scope>
</reference>
<reference key="5">
    <citation type="journal article" date="2004" name="Genome Res.">
        <title>The status, quality, and expansion of the NIH full-length cDNA project: the Mammalian Gene Collection (MGC).</title>
        <authorList>
            <consortium name="The MGC Project Team"/>
        </authorList>
    </citation>
    <scope>NUCLEOTIDE SEQUENCE [LARGE SCALE MRNA]</scope>
    <source>
        <tissue>Lung</tissue>
    </source>
</reference>
<reference key="6">
    <citation type="journal article" date="2002" name="Blood">
        <title>Vesicle-associated membrane protein 3 (VAMP-3) and VAMP-8 are present in human platelets and are required for granule secretion.</title>
        <authorList>
            <person name="Polgar J."/>
            <person name="Chung S.H."/>
            <person name="Reed G.L."/>
        </authorList>
    </citation>
    <scope>PROTEIN SEQUENCE OF 15-24 AND 38-59</scope>
    <scope>FUNCTION IN SECRETION</scope>
    <scope>IDENTIFICATION IN A COMPLEX WITH STX1A AND SNAP23</scope>
    <scope>TISSUE SPECIFICITY</scope>
</reference>
<reference key="7">
    <citation type="journal article" date="2009" name="Anal. Chem.">
        <title>Lys-N and trypsin cover complementary parts of the phosphoproteome in a refined SCX-based approach.</title>
        <authorList>
            <person name="Gauci S."/>
            <person name="Helbig A.O."/>
            <person name="Slijper M."/>
            <person name="Krijgsveld J."/>
            <person name="Heck A.J."/>
            <person name="Mohammed S."/>
        </authorList>
    </citation>
    <scope>ACETYLATION [LARGE SCALE ANALYSIS] AT MET-1</scope>
    <scope>IDENTIFICATION BY MASS SPECTROMETRY [LARGE SCALE ANALYSIS]</scope>
</reference>
<reference key="8">
    <citation type="journal article" date="2011" name="BMC Syst. Biol.">
        <title>Initial characterization of the human central proteome.</title>
        <authorList>
            <person name="Burkard T.R."/>
            <person name="Planyavsky M."/>
            <person name="Kaupe I."/>
            <person name="Breitwieser F.P."/>
            <person name="Buerckstuemmer T."/>
            <person name="Bennett K.L."/>
            <person name="Superti-Furga G."/>
            <person name="Colinge J."/>
        </authorList>
    </citation>
    <scope>IDENTIFICATION BY MASS SPECTROMETRY [LARGE SCALE ANALYSIS]</scope>
</reference>
<reference key="9">
    <citation type="journal article" date="2012" name="Cell">
        <title>The hairpin-type tail-anchored SNARE syntaxin 17 targets to autophagosomes for fusion with endosomes/lysosomes.</title>
        <authorList>
            <person name="Itakura E."/>
            <person name="Kishi-Itakura C."/>
            <person name="Mizushima N."/>
        </authorList>
    </citation>
    <scope>FUNCTION IN AUTOPHAGY</scope>
    <scope>INTERACTION WITH SNAP29 AND STX17</scope>
</reference>
<reference key="10">
    <citation type="journal article" date="2013" name="J. Proteome Res.">
        <title>Toward a comprehensive characterization of a human cancer cell phosphoproteome.</title>
        <authorList>
            <person name="Zhou H."/>
            <person name="Di Palma S."/>
            <person name="Preisinger C."/>
            <person name="Peng M."/>
            <person name="Polat A.N."/>
            <person name="Heck A.J."/>
            <person name="Mohammed S."/>
        </authorList>
    </citation>
    <scope>PHOSPHORYLATION [LARGE SCALE ANALYSIS] AT SER-5; SER-18; THR-28; THR-48; THR-54 AND SER-55</scope>
    <scope>IDENTIFICATION BY MASS SPECTROMETRY [LARGE SCALE ANALYSIS]</scope>
    <source>
        <tissue>Cervix carcinoma</tissue>
        <tissue>Erythroleukemia</tissue>
    </source>
</reference>
<reference key="11">
    <citation type="journal article" date="2015" name="EMBO Rep.">
        <title>Starvation-induced MTMR13 and RAB21 activity regulates VAMP8 to promote autophagosome-lysosome fusion.</title>
        <authorList>
            <person name="Jean S."/>
            <person name="Cox S."/>
            <person name="Nassari S."/>
            <person name="Kiger A.A."/>
        </authorList>
    </citation>
    <scope>INTERACTION WITH RAB21 AND SBF2</scope>
    <scope>SUBCELLULAR LOCATION</scope>
</reference>
<reference key="12">
    <citation type="journal article" date="2015" name="Proteomics">
        <title>N-terminome analysis of the human mitochondrial proteome.</title>
        <authorList>
            <person name="Vaca Jacome A.S."/>
            <person name="Rabilloud T."/>
            <person name="Schaeffer-Reiss C."/>
            <person name="Rompais M."/>
            <person name="Ayoub D."/>
            <person name="Lane L."/>
            <person name="Bairoch A."/>
            <person name="Van Dorsselaer A."/>
            <person name="Carapito C."/>
        </authorList>
    </citation>
    <scope>ACETYLATION [LARGE SCALE ANALYSIS] AT MET-1</scope>
    <scope>IDENTIFICATION BY MASS SPECTROMETRY [LARGE SCALE ANALYSIS]</scope>
</reference>
<reference key="13">
    <citation type="journal article" date="2019" name="Mol. Cell">
        <title>The ER-Localized Transmembrane Protein TMEM39A/SUSR2 Regulates Autophagy by Controlling the Trafficking of the PtdIns(4)P Phosphatase SAC1.</title>
        <authorList>
            <person name="Miao G."/>
            <person name="Zhang Y."/>
            <person name="Chen D."/>
            <person name="Zhang H."/>
        </authorList>
    </citation>
    <scope>INTERACTION WITH STX17</scope>
</reference>
<reference key="14">
    <citation type="journal article" date="2020" name="Dev. Cell">
        <title>ORF3a of the COVID-19 virus SARS-CoV-2 blocks HOPS complex-mediated assembly of the SNARE complex required for autolysosome formation.</title>
        <authorList>
            <person name="Miao G."/>
            <person name="Zhao H."/>
            <person name="Li Y."/>
            <person name="Ji M."/>
            <person name="Chen Y."/>
            <person name="Shi Y."/>
            <person name="Bi Y."/>
            <person name="Wang P."/>
            <person name="Zhang H."/>
        </authorList>
    </citation>
    <scope>INTERACTION WITH STX17</scope>
</reference>
<reference key="15">
    <citation type="journal article" date="2020" name="J. Virol.">
        <title>VAMP8 Contributes to the TRIM6-Mediated Type I Interferon Antiviral Response during West Nile Virus Infection.</title>
        <authorList>
            <person name="van Tol S."/>
            <person name="Atkins C."/>
            <person name="Bharaj P."/>
            <person name="Johnson K.N."/>
            <person name="Hage A."/>
            <person name="Freiberg A.N."/>
            <person name="Rajsbaum R."/>
        </authorList>
    </citation>
    <scope>FUNCTION</scope>
    <scope>INTERACTION WITH TRIM6</scope>
</reference>
<reference key="16">
    <citation type="journal article" date="2018" name="Nat. Microbiol.">
        <title>Nepsilon-fatty acylation of multiple membrane-associated proteins by Shigella IcsB effector to modulate host function.</title>
        <authorList>
            <person name="Liu W."/>
            <person name="Zhou Y."/>
            <person name="Peng T."/>
            <person name="Zhou P."/>
            <person name="Ding X."/>
            <person name="Li Z."/>
            <person name="Zhong H."/>
            <person name="Xu Y."/>
            <person name="Chen S."/>
            <person name="Hang H.C."/>
            <person name="Shao F."/>
        </authorList>
    </citation>
    <scope>STEAROYLATION AT LYS-64 AND LYS-68 (MICROBIAL INFECTION)</scope>
    <scope>MUTAGENESIS OF 64-LYS--LYS-68 AND LYS-72</scope>
</reference>
<reference key="17">
    <citation type="journal article" date="2023" name="Nat. Commun.">
        <title>C9orf72-catalyzed GTP loading of Rab39A enables HOPS-mediated membrane tethering and fusion in mammalian autophagy.</title>
        <authorList>
            <person name="Zhang S."/>
            <person name="Tong M."/>
            <person name="Zheng D."/>
            <person name="Huang H."/>
            <person name="Li L."/>
            <person name="Ungermann C."/>
            <person name="Pan Y."/>
            <person name="Luo H."/>
            <person name="Lei M."/>
            <person name="Tang Z."/>
            <person name="Fu W."/>
            <person name="Chen S."/>
            <person name="Liu X."/>
            <person name="Zhong Q."/>
        </authorList>
    </citation>
    <scope>INTERACTION WITH STX17 AND SNAP29</scope>
</reference>
<reference key="18">
    <citation type="journal article" date="2015" name="Nature">
        <title>ATG14 promotes membrane tethering and fusion of autophagosomes to endolysosomes.</title>
        <authorList>
            <person name="Diao J."/>
            <person name="Liu R."/>
            <person name="Rong Y."/>
            <person name="Zhao M."/>
            <person name="Zhang J."/>
            <person name="Lai Y."/>
            <person name="Zhou Q."/>
            <person name="Wilz L.M."/>
            <person name="Li J."/>
            <person name="Vivona S."/>
            <person name="Pfuetzner R.A."/>
            <person name="Brunger A.T."/>
            <person name="Zhong Q."/>
        </authorList>
    </citation>
    <scope>X-RAY CRYSTALLOGRAPHY (1.4 ANGSTROMS) OF 11-74 IN COMPLEX WITH STX17 AND SNAP29</scope>
    <scope>FUNCTION</scope>
</reference>
<dbReference type="EMBL" id="AF053233">
    <property type="protein sequence ID" value="AAC08434.1"/>
    <property type="molecule type" value="mRNA"/>
</dbReference>
<dbReference type="EMBL" id="BT006700">
    <property type="protein sequence ID" value="AAP35346.1"/>
    <property type="molecule type" value="mRNA"/>
</dbReference>
<dbReference type="EMBL" id="CR456995">
    <property type="protein sequence ID" value="CAG33276.1"/>
    <property type="molecule type" value="mRNA"/>
</dbReference>
<dbReference type="EMBL" id="AC016753">
    <property type="protein sequence ID" value="AAY24341.1"/>
    <property type="molecule type" value="Genomic_DNA"/>
</dbReference>
<dbReference type="EMBL" id="BC001634">
    <property type="protein sequence ID" value="AAH01634.1"/>
    <property type="molecule type" value="mRNA"/>
</dbReference>
<dbReference type="CCDS" id="CCDS1979.1"/>
<dbReference type="RefSeq" id="NP_003752.2">
    <property type="nucleotide sequence ID" value="NM_003761.4"/>
</dbReference>
<dbReference type="PDB" id="4WY4">
    <property type="method" value="X-ray"/>
    <property type="resolution" value="1.40 A"/>
    <property type="chains" value="A=11-74"/>
</dbReference>
<dbReference type="PDB" id="7BV6">
    <property type="method" value="X-ray"/>
    <property type="resolution" value="3.05 A"/>
    <property type="chains" value="A/E/I/M/Q/U=8-75"/>
</dbReference>
<dbReference type="PDBsum" id="4WY4"/>
<dbReference type="PDBsum" id="7BV6"/>
<dbReference type="SMR" id="Q9BV40"/>
<dbReference type="BioGRID" id="114221">
    <property type="interactions" value="113"/>
</dbReference>
<dbReference type="ComplexPortal" id="CPX-25782">
    <property type="entry name" value="SNARE complex STX17-SNAP29-VAMP8"/>
</dbReference>
<dbReference type="CORUM" id="Q9BV40"/>
<dbReference type="DIP" id="DIP-40358N"/>
<dbReference type="FunCoup" id="Q9BV40">
    <property type="interactions" value="614"/>
</dbReference>
<dbReference type="IntAct" id="Q9BV40">
    <property type="interactions" value="53"/>
</dbReference>
<dbReference type="MINT" id="Q9BV40"/>
<dbReference type="STRING" id="9606.ENSP00000263864"/>
<dbReference type="TCDB" id="1.F.1.1.1">
    <property type="family name" value="the synaptosomal vesicle fusion pore (svf-pore) family"/>
</dbReference>
<dbReference type="GlyGen" id="Q9BV40">
    <property type="glycosylation" value="1 site, 1 N-linked glycan (1 site)"/>
</dbReference>
<dbReference type="iPTMnet" id="Q9BV40"/>
<dbReference type="MetOSite" id="Q9BV40"/>
<dbReference type="PhosphoSitePlus" id="Q9BV40"/>
<dbReference type="SwissPalm" id="Q9BV40"/>
<dbReference type="BioMuta" id="VAMP8"/>
<dbReference type="DMDM" id="55976764"/>
<dbReference type="jPOST" id="Q9BV40"/>
<dbReference type="MassIVE" id="Q9BV40"/>
<dbReference type="PaxDb" id="9606-ENSP00000263864"/>
<dbReference type="PeptideAtlas" id="Q9BV40"/>
<dbReference type="ProteomicsDB" id="79166"/>
<dbReference type="Pumba" id="Q9BV40"/>
<dbReference type="TopDownProteomics" id="Q9BV40"/>
<dbReference type="Antibodypedia" id="1528">
    <property type="antibodies" value="193 antibodies from 32 providers"/>
</dbReference>
<dbReference type="DNASU" id="8673"/>
<dbReference type="Ensembl" id="ENST00000263864.10">
    <property type="protein sequence ID" value="ENSP00000263864.5"/>
    <property type="gene ID" value="ENSG00000118640.11"/>
</dbReference>
<dbReference type="GeneID" id="8673"/>
<dbReference type="KEGG" id="hsa:8673"/>
<dbReference type="MANE-Select" id="ENST00000263864.10">
    <property type="protein sequence ID" value="ENSP00000263864.5"/>
    <property type="RefSeq nucleotide sequence ID" value="NM_003761.5"/>
    <property type="RefSeq protein sequence ID" value="NP_003752.2"/>
</dbReference>
<dbReference type="UCSC" id="uc002spt.5">
    <property type="organism name" value="human"/>
</dbReference>
<dbReference type="AGR" id="HGNC:12647"/>
<dbReference type="CTD" id="8673"/>
<dbReference type="DisGeNET" id="8673"/>
<dbReference type="GeneCards" id="VAMP8"/>
<dbReference type="HGNC" id="HGNC:12647">
    <property type="gene designation" value="VAMP8"/>
</dbReference>
<dbReference type="HPA" id="ENSG00000118640">
    <property type="expression patterns" value="Low tissue specificity"/>
</dbReference>
<dbReference type="MIM" id="603177">
    <property type="type" value="gene"/>
</dbReference>
<dbReference type="neXtProt" id="NX_Q9BV40"/>
<dbReference type="OpenTargets" id="ENSG00000118640"/>
<dbReference type="PharmGKB" id="PA37271"/>
<dbReference type="VEuPathDB" id="HostDB:ENSG00000118640"/>
<dbReference type="eggNOG" id="KOG0860">
    <property type="taxonomic scope" value="Eukaryota"/>
</dbReference>
<dbReference type="GeneTree" id="ENSGT00940000160325"/>
<dbReference type="HOGENOM" id="CLU_064620_5_0_1"/>
<dbReference type="InParanoid" id="Q9BV40"/>
<dbReference type="OMA" id="VRKKMWW"/>
<dbReference type="OrthoDB" id="190375at2759"/>
<dbReference type="PAN-GO" id="Q9BV40">
    <property type="GO annotations" value="8 GO annotations based on evolutionary models"/>
</dbReference>
<dbReference type="PhylomeDB" id="Q9BV40"/>
<dbReference type="TreeFam" id="TF320419"/>
<dbReference type="PathwayCommons" id="Q9BV40"/>
<dbReference type="Reactome" id="R-HSA-1236974">
    <property type="pathway name" value="ER-Phagosome pathway"/>
</dbReference>
<dbReference type="Reactome" id="R-HSA-199992">
    <property type="pathway name" value="trans-Golgi Network Vesicle Budding"/>
</dbReference>
<dbReference type="Reactome" id="R-HSA-432720">
    <property type="pathway name" value="Lysosome Vesicle Biogenesis"/>
</dbReference>
<dbReference type="Reactome" id="R-HSA-432722">
    <property type="pathway name" value="Golgi Associated Vesicle Biogenesis"/>
</dbReference>
<dbReference type="Reactome" id="R-HSA-6798695">
    <property type="pathway name" value="Neutrophil degranulation"/>
</dbReference>
<dbReference type="Reactome" id="R-HSA-8856825">
    <property type="pathway name" value="Cargo recognition for clathrin-mediated endocytosis"/>
</dbReference>
<dbReference type="Reactome" id="R-HSA-8856828">
    <property type="pathway name" value="Clathrin-mediated endocytosis"/>
</dbReference>
<dbReference type="SignaLink" id="Q9BV40"/>
<dbReference type="SIGNOR" id="Q9BV40"/>
<dbReference type="BioGRID-ORCS" id="8673">
    <property type="hits" value="9 hits in 1156 CRISPR screens"/>
</dbReference>
<dbReference type="ChiTaRS" id="VAMP8">
    <property type="organism name" value="human"/>
</dbReference>
<dbReference type="EvolutionaryTrace" id="Q9BV40"/>
<dbReference type="GeneWiki" id="Vesicle-associated_membrane_protein_8"/>
<dbReference type="GenomeRNAi" id="8673"/>
<dbReference type="Pharos" id="Q9BV40">
    <property type="development level" value="Tbio"/>
</dbReference>
<dbReference type="PRO" id="PR:Q9BV40"/>
<dbReference type="Proteomes" id="UP000005640">
    <property type="component" value="Chromosome 2"/>
</dbReference>
<dbReference type="RNAct" id="Q9BV40">
    <property type="molecule type" value="protein"/>
</dbReference>
<dbReference type="Bgee" id="ENSG00000118640">
    <property type="expression patterns" value="Expressed in palpebral conjunctiva and 200 other cell types or tissues"/>
</dbReference>
<dbReference type="ExpressionAtlas" id="Q9BV40">
    <property type="expression patterns" value="baseline and differential"/>
</dbReference>
<dbReference type="GO" id="GO:0035577">
    <property type="term" value="C:azurophil granule membrane"/>
    <property type="evidence" value="ECO:0000314"/>
    <property type="project" value="UniProtKB"/>
</dbReference>
<dbReference type="GO" id="GO:0030669">
    <property type="term" value="C:clathrin-coated endocytic vesicle membrane"/>
    <property type="evidence" value="ECO:0000304"/>
    <property type="project" value="Reactome"/>
</dbReference>
<dbReference type="GO" id="GO:0005737">
    <property type="term" value="C:cytoplasm"/>
    <property type="evidence" value="ECO:0000314"/>
    <property type="project" value="UniProtKB"/>
</dbReference>
<dbReference type="GO" id="GO:0005829">
    <property type="term" value="C:cytosol"/>
    <property type="evidence" value="ECO:0000314"/>
    <property type="project" value="UniProtKB"/>
</dbReference>
<dbReference type="GO" id="GO:0005769">
    <property type="term" value="C:early endosome"/>
    <property type="evidence" value="ECO:0000304"/>
    <property type="project" value="ProtInc"/>
</dbReference>
<dbReference type="GO" id="GO:0031901">
    <property type="term" value="C:early endosome membrane"/>
    <property type="evidence" value="ECO:0007669"/>
    <property type="project" value="UniProtKB-SubCell"/>
</dbReference>
<dbReference type="GO" id="GO:0070062">
    <property type="term" value="C:extracellular exosome"/>
    <property type="evidence" value="ECO:0007005"/>
    <property type="project" value="UniProtKB"/>
</dbReference>
<dbReference type="GO" id="GO:0031902">
    <property type="term" value="C:late endosome membrane"/>
    <property type="evidence" value="ECO:0000314"/>
    <property type="project" value="UniProtKB"/>
</dbReference>
<dbReference type="GO" id="GO:0005765">
    <property type="term" value="C:lysosomal membrane"/>
    <property type="evidence" value="ECO:0000314"/>
    <property type="project" value="UniProtKB"/>
</dbReference>
<dbReference type="GO" id="GO:0016020">
    <property type="term" value="C:membrane"/>
    <property type="evidence" value="ECO:0000314"/>
    <property type="project" value="UniProtKB"/>
</dbReference>
<dbReference type="GO" id="GO:0098594">
    <property type="term" value="C:mucin granule"/>
    <property type="evidence" value="ECO:0000314"/>
    <property type="project" value="UniProtKB"/>
</dbReference>
<dbReference type="GO" id="GO:0048471">
    <property type="term" value="C:perinuclear region of cytoplasm"/>
    <property type="evidence" value="ECO:0000314"/>
    <property type="project" value="UniProtKB"/>
</dbReference>
<dbReference type="GO" id="GO:0030670">
    <property type="term" value="C:phagocytic vesicle membrane"/>
    <property type="evidence" value="ECO:0000304"/>
    <property type="project" value="Reactome"/>
</dbReference>
<dbReference type="GO" id="GO:0005886">
    <property type="term" value="C:plasma membrane"/>
    <property type="evidence" value="ECO:0000314"/>
    <property type="project" value="UniProtKB"/>
</dbReference>
<dbReference type="GO" id="GO:0055037">
    <property type="term" value="C:recycling endosome"/>
    <property type="evidence" value="ECO:0000314"/>
    <property type="project" value="UniProtKB"/>
</dbReference>
<dbReference type="GO" id="GO:0055038">
    <property type="term" value="C:recycling endosome membrane"/>
    <property type="evidence" value="ECO:0000304"/>
    <property type="project" value="Reactome"/>
</dbReference>
<dbReference type="GO" id="GO:0030667">
    <property type="term" value="C:secretory granule membrane"/>
    <property type="evidence" value="ECO:0000314"/>
    <property type="project" value="UniProtKB"/>
</dbReference>
<dbReference type="GO" id="GO:0031201">
    <property type="term" value="C:SNARE complex"/>
    <property type="evidence" value="ECO:0000314"/>
    <property type="project" value="UniProtKB"/>
</dbReference>
<dbReference type="GO" id="GO:0035579">
    <property type="term" value="C:specific granule membrane"/>
    <property type="evidence" value="ECO:0000304"/>
    <property type="project" value="Reactome"/>
</dbReference>
<dbReference type="GO" id="GO:0070821">
    <property type="term" value="C:tertiary granule membrane"/>
    <property type="evidence" value="ECO:0000304"/>
    <property type="project" value="Reactome"/>
</dbReference>
<dbReference type="GO" id="GO:0031982">
    <property type="term" value="C:vesicle"/>
    <property type="evidence" value="ECO:0000314"/>
    <property type="project" value="UniProtKB"/>
</dbReference>
<dbReference type="GO" id="GO:0042589">
    <property type="term" value="C:zymogen granule membrane"/>
    <property type="evidence" value="ECO:0007669"/>
    <property type="project" value="UniProtKB-SubCell"/>
</dbReference>
<dbReference type="GO" id="GO:0019869">
    <property type="term" value="F:chloride channel inhibitor activity"/>
    <property type="evidence" value="ECO:0000314"/>
    <property type="project" value="UniProtKB"/>
</dbReference>
<dbReference type="GO" id="GO:0005484">
    <property type="term" value="F:SNAP receptor activity"/>
    <property type="evidence" value="ECO:0000318"/>
    <property type="project" value="GO_Central"/>
</dbReference>
<dbReference type="GO" id="GO:0019905">
    <property type="term" value="F:syntaxin binding"/>
    <property type="evidence" value="ECO:0000318"/>
    <property type="project" value="GO_Central"/>
</dbReference>
<dbReference type="GO" id="GO:0097352">
    <property type="term" value="P:autophagosome maturation"/>
    <property type="evidence" value="ECO:0000315"/>
    <property type="project" value="UniProtKB"/>
</dbReference>
<dbReference type="GO" id="GO:0016240">
    <property type="term" value="P:autophagosome membrane docking"/>
    <property type="evidence" value="ECO:0000314"/>
    <property type="project" value="GO_Central"/>
</dbReference>
<dbReference type="GO" id="GO:0051607">
    <property type="term" value="P:defense response to virus"/>
    <property type="evidence" value="ECO:0007669"/>
    <property type="project" value="UniProtKB-KW"/>
</dbReference>
<dbReference type="GO" id="GO:0070254">
    <property type="term" value="P:mucus secretion"/>
    <property type="evidence" value="ECO:0000315"/>
    <property type="project" value="UniProtKB"/>
</dbReference>
<dbReference type="GO" id="GO:1903531">
    <property type="term" value="P:negative regulation of secretion by cell"/>
    <property type="evidence" value="ECO:0000314"/>
    <property type="project" value="UniProtKB"/>
</dbReference>
<dbReference type="GO" id="GO:1903595">
    <property type="term" value="P:positive regulation of histamine secretion by mast cell"/>
    <property type="evidence" value="ECO:0000315"/>
    <property type="project" value="UniProtKB"/>
</dbReference>
<dbReference type="GO" id="GO:0015031">
    <property type="term" value="P:protein transport"/>
    <property type="evidence" value="ECO:0007669"/>
    <property type="project" value="UniProtKB-KW"/>
</dbReference>
<dbReference type="GO" id="GO:1903076">
    <property type="term" value="P:regulation of protein localization to plasma membrane"/>
    <property type="evidence" value="ECO:0000314"/>
    <property type="project" value="UniProtKB"/>
</dbReference>
<dbReference type="GO" id="GO:0035493">
    <property type="term" value="P:SNARE complex assembly"/>
    <property type="evidence" value="ECO:0000318"/>
    <property type="project" value="GO_Central"/>
</dbReference>
<dbReference type="GO" id="GO:0046718">
    <property type="term" value="P:symbiont entry into host cell"/>
    <property type="evidence" value="ECO:0000315"/>
    <property type="project" value="MGI"/>
</dbReference>
<dbReference type="GO" id="GO:0006906">
    <property type="term" value="P:vesicle fusion"/>
    <property type="evidence" value="ECO:0000318"/>
    <property type="project" value="GO_Central"/>
</dbReference>
<dbReference type="CDD" id="cd15868">
    <property type="entry name" value="R-SNARE_VAMP8"/>
    <property type="match status" value="1"/>
</dbReference>
<dbReference type="FunFam" id="1.20.5.110:FF:000055">
    <property type="entry name" value="vesicle-associated membrane protein 8"/>
    <property type="match status" value="1"/>
</dbReference>
<dbReference type="Gene3D" id="1.20.5.110">
    <property type="match status" value="1"/>
</dbReference>
<dbReference type="InterPro" id="IPR001388">
    <property type="entry name" value="Synaptobrevin-like"/>
</dbReference>
<dbReference type="InterPro" id="IPR016444">
    <property type="entry name" value="Synaptobrevin/VAMP"/>
</dbReference>
<dbReference type="InterPro" id="IPR042855">
    <property type="entry name" value="V_SNARE_CC"/>
</dbReference>
<dbReference type="PANTHER" id="PTHR45701">
    <property type="entry name" value="SYNAPTOBREVIN FAMILY MEMBER"/>
    <property type="match status" value="1"/>
</dbReference>
<dbReference type="Pfam" id="PF00957">
    <property type="entry name" value="Synaptobrevin"/>
    <property type="match status" value="1"/>
</dbReference>
<dbReference type="PIRSF" id="PIRSF005409">
    <property type="entry name" value="Synaptobrevin_euk"/>
    <property type="match status" value="1"/>
</dbReference>
<dbReference type="PRINTS" id="PR00219">
    <property type="entry name" value="SYNAPTOBREVN"/>
</dbReference>
<dbReference type="SUPFAM" id="SSF58038">
    <property type="entry name" value="SNARE fusion complex"/>
    <property type="match status" value="1"/>
</dbReference>
<dbReference type="PROSITE" id="PS00417">
    <property type="entry name" value="SYNAPTOBREVIN"/>
    <property type="match status" value="1"/>
</dbReference>
<dbReference type="PROSITE" id="PS50892">
    <property type="entry name" value="V_SNARE"/>
    <property type="match status" value="1"/>
</dbReference>
<gene>
    <name evidence="15" type="primary">VAMP8</name>
</gene>
<protein>
    <recommendedName>
        <fullName evidence="15">Vesicle-associated membrane protein 8</fullName>
        <shortName evidence="15">VAMP-8</shortName>
    </recommendedName>
    <alternativeName>
        <fullName evidence="16">Endobrevin</fullName>
        <shortName evidence="16">EDB</shortName>
    </alternativeName>
</protein>
<accession>Q9BV40</accession>
<accession>O60625</accession>
<accession>Q53SP9</accession>
<accession>Q6IB09</accession>
<proteinExistence type="evidence at protein level"/>
<organism>
    <name type="scientific">Homo sapiens</name>
    <name type="common">Human</name>
    <dbReference type="NCBI Taxonomy" id="9606"/>
    <lineage>
        <taxon>Eukaryota</taxon>
        <taxon>Metazoa</taxon>
        <taxon>Chordata</taxon>
        <taxon>Craniata</taxon>
        <taxon>Vertebrata</taxon>
        <taxon>Euteleostomi</taxon>
        <taxon>Mammalia</taxon>
        <taxon>Eutheria</taxon>
        <taxon>Euarchontoglires</taxon>
        <taxon>Primates</taxon>
        <taxon>Haplorrhini</taxon>
        <taxon>Catarrhini</taxon>
        <taxon>Hominidae</taxon>
        <taxon>Homo</taxon>
    </lineage>
</organism>
<keyword id="KW-0002">3D-structure</keyword>
<keyword id="KW-0007">Acetylation</keyword>
<keyword id="KW-0051">Antiviral defense</keyword>
<keyword id="KW-0072">Autophagy</keyword>
<keyword id="KW-1003">Cell membrane</keyword>
<keyword id="KW-0175">Coiled coil</keyword>
<keyword id="KW-0968">Cytoplasmic vesicle</keyword>
<keyword id="KW-0903">Direct protein sequencing</keyword>
<keyword id="KW-0967">Endosome</keyword>
<keyword id="KW-0449">Lipoprotein</keyword>
<keyword id="KW-0458">Lysosome</keyword>
<keyword id="KW-0472">Membrane</keyword>
<keyword id="KW-0597">Phosphoprotein</keyword>
<keyword id="KW-0653">Protein transport</keyword>
<keyword id="KW-1267">Proteomics identification</keyword>
<keyword id="KW-1185">Reference proteome</keyword>
<keyword id="KW-0812">Transmembrane</keyword>
<keyword id="KW-1133">Transmembrane helix</keyword>
<keyword id="KW-0813">Transport</keyword>
<name>VAMP8_HUMAN</name>
<comment type="function">
    <text evidence="2 5 6 8 10">SNAREs, soluble N-ethylmaleimide-sensitive factor-attachment protein receptors, are essential proteins for fusion of cellular membranes. SNAREs localized on opposing membranes assemble to form a trans-SNARE complex, an extended, parallel four alpha-helical bundle that drives membrane fusion. VAMP8 is a SNARE involved in autophagy through the direct control of autophagosome membrane fusion with the lysososome membrane via its interaction with the STX17-SNAP29 binary t-SNARE complex (PubMed:23217709, PubMed:25686604). Also required for dense-granule secretion in platelets (PubMed:12130530). Also plays a role in regulated enzyme secretion in pancreatic acinar cells (By similarity). Involved in the abscission of the midbody during cell division, which leads to completely separate daughter cells (By similarity). Involved in the homotypic fusion of early and late endosomes (By similarity). Also participates in the activation of type I interferon antiviral response through a TRIM6-dependent mechanism (PubMed:31694946).</text>
</comment>
<comment type="subunit">
    <text evidence="1 5 7 8 10 11 12 13">Forms a SNARE complex composed of VAMP8, SNAP29 and STX17 involved in fusion of autophagosome with lysosome (PubMed:25686604, PubMed:37821429). Found in a number of SNARE complexes with NAPA, SNAP23, SNAP25, STX1A, STX4, STX7, STX8 and VTI1B (PubMed:12130530). Interacts with PICALM (By similarity). SNARE complex formation and binding by PICALM are mutually exclusive processes for VAMP8 (By similarity). Interacts with SBF2/MTMR13 (PubMed:25648148). Interacts with RAB21 (in GTP-bound form) in response to starvation; the interaction probably regulates VAMP8 endolysosomal trafficking (PubMed:25648148). Interacts with STX17; this interaction is increased in the absence of TMEM39A (PubMed:31806350, PubMed:33422265). Interacts with TRIM6 (PubMed:31694946).</text>
</comment>
<comment type="subunit">
    <text evidence="12">(Microbial infection) The interaction with STX17 is decreased in presence of SARS coronavirus-2/SARS-CoV-2 ORF3A protein.</text>
</comment>
<comment type="interaction">
    <interactant intactId="EBI-727028">
        <id>Q9BV40</id>
    </interactant>
    <interactant intactId="EBI-490676">
        <id>O95721</id>
        <label>SNAP29</label>
    </interactant>
    <organismsDiffer>false</organismsDiffer>
    <experiments>8</experiments>
</comment>
<comment type="interaction">
    <interactant intactId="EBI-727028">
        <id>Q9BV40</id>
    </interactant>
    <interactant intactId="EBI-2797775">
        <id>P56962</id>
        <label>STX17</label>
    </interactant>
    <organismsDiffer>false</organismsDiffer>
    <experiments>11</experiments>
</comment>
<comment type="interaction">
    <interactant intactId="EBI-727028">
        <id>Q9BV40</id>
    </interactant>
    <interactant intactId="EBI-3221827">
        <id>O15400</id>
        <label>STX7</label>
    </interactant>
    <organismsDiffer>false</organismsDiffer>
    <experiments>5</experiments>
</comment>
<comment type="subcellular location">
    <subcellularLocation>
        <location evidence="8">Lysosome membrane</location>
        <topology evidence="17">Single-pass type IV membrane protein</topology>
    </subcellularLocation>
    <subcellularLocation>
        <location evidence="7 14">Early endosome membrane</location>
        <topology evidence="17">Single-pass type IV membrane protein</topology>
    </subcellularLocation>
    <subcellularLocation>
        <location evidence="7">Late endosome membrane</location>
        <topology evidence="17">Single-pass type IV membrane protein</topology>
    </subcellularLocation>
    <subcellularLocation>
        <location evidence="1">Cell membrane</location>
        <topology evidence="17">Single-pass type IV membrane protein</topology>
    </subcellularLocation>
    <subcellularLocation>
        <location evidence="1">Zymogen granule membrane</location>
        <topology evidence="17">Single-pass type IV membrane protein</topology>
    </subcellularLocation>
    <text evidence="2">Perinuclear vesicular structures of the early and late endosomes, coated pits, and trans-Golgi (By similarity). Sub-tight junctional domain in retinal pigment epithelium cells. Midbody region during cytokinesis. Lumenal oriented, apical membranes of nephric tubular cell (By similarity). Cycles through the apical but not through the basolateral plasma membrane (By similarity). Apical region of acinar cells; in zymogen granule membranes (By similarity).</text>
</comment>
<comment type="tissue specificity">
    <text evidence="5">Platelets.</text>
</comment>
<comment type="PTM">
    <text evidence="9">(Microbial infection) Stearoylated By S.flexneri N-epsilon-fatty acyltransferase IcsB, thereby disrupting the host actin cytoskeleton.</text>
</comment>
<comment type="similarity">
    <text evidence="17">Belongs to the synaptobrevin family.</text>
</comment>
<evidence type="ECO:0000250" key="1">
    <source>
        <dbReference type="UniProtKB" id="O70404"/>
    </source>
</evidence>
<evidence type="ECO:0000250" key="2">
    <source>
        <dbReference type="UniProtKB" id="Q9WUF4"/>
    </source>
</evidence>
<evidence type="ECO:0000255" key="3"/>
<evidence type="ECO:0000255" key="4">
    <source>
        <dbReference type="PROSITE-ProRule" id="PRU00290"/>
    </source>
</evidence>
<evidence type="ECO:0000269" key="5">
    <source>
    </source>
</evidence>
<evidence type="ECO:0000269" key="6">
    <source>
    </source>
</evidence>
<evidence type="ECO:0000269" key="7">
    <source>
    </source>
</evidence>
<evidence type="ECO:0000269" key="8">
    <source>
    </source>
</evidence>
<evidence type="ECO:0000269" key="9">
    <source>
    </source>
</evidence>
<evidence type="ECO:0000269" key="10">
    <source>
    </source>
</evidence>
<evidence type="ECO:0000269" key="11">
    <source>
    </source>
</evidence>
<evidence type="ECO:0000269" key="12">
    <source>
    </source>
</evidence>
<evidence type="ECO:0000269" key="13">
    <source>
    </source>
</evidence>
<evidence type="ECO:0000269" key="14">
    <source>
    </source>
</evidence>
<evidence type="ECO:0000303" key="15">
    <source>
    </source>
</evidence>
<evidence type="ECO:0000303" key="16">
    <source>
    </source>
</evidence>
<evidence type="ECO:0000305" key="17"/>
<evidence type="ECO:0007744" key="18">
    <source>
    </source>
</evidence>
<evidence type="ECO:0007744" key="19">
    <source>
    </source>
</evidence>
<evidence type="ECO:0007744" key="20">
    <source>
    </source>
</evidence>
<evidence type="ECO:0007829" key="21">
    <source>
        <dbReference type="PDB" id="4WY4"/>
    </source>
</evidence>
<sequence length="100" mass="11438">MEEASEGGGNDRVRNLQSEVEGVKNIMTQNVERILARGENLEHLRNKTEDLEATSEHFKTTSQKVARKFWWKNVKMIVLICVIVFIIILFIVLFATGAFS</sequence>
<feature type="chain" id="PRO_0000206736" description="Vesicle-associated membrane protein 8">
    <location>
        <begin position="1"/>
        <end position="100"/>
    </location>
</feature>
<feature type="topological domain" description="Cytoplasmic" evidence="3">
    <location>
        <begin position="1"/>
        <end position="75"/>
    </location>
</feature>
<feature type="transmembrane region" description="Helical; Anchor for type IV membrane protein" evidence="3">
    <location>
        <begin position="76"/>
        <end position="96"/>
    </location>
</feature>
<feature type="topological domain" description="Vesicular" evidence="3">
    <location>
        <begin position="97"/>
        <end position="100"/>
    </location>
</feature>
<feature type="domain" description="v-SNARE coiled-coil homology" evidence="4">
    <location>
        <begin position="12"/>
        <end position="72"/>
    </location>
</feature>
<feature type="site" description="Interaction with STX8" evidence="2">
    <location>
        <position position="33"/>
    </location>
</feature>
<feature type="modified residue" description="N-acetylmethionine" evidence="18 20">
    <location>
        <position position="1"/>
    </location>
</feature>
<feature type="modified residue" description="Phosphoserine" evidence="19">
    <location>
        <position position="5"/>
    </location>
</feature>
<feature type="modified residue" description="Phosphoserine" evidence="19">
    <location>
        <position position="18"/>
    </location>
</feature>
<feature type="modified residue" description="Phosphothreonine" evidence="19">
    <location>
        <position position="28"/>
    </location>
</feature>
<feature type="modified residue" description="Phosphothreonine" evidence="19">
    <location>
        <position position="48"/>
    </location>
</feature>
<feature type="modified residue" description="Phosphothreonine" evidence="19">
    <location>
        <position position="54"/>
    </location>
</feature>
<feature type="modified residue" description="Phosphoserine" evidence="19">
    <location>
        <position position="55"/>
    </location>
</feature>
<feature type="lipid moiety-binding region" description="(Microbial infection) N6-stearoyl lysine" evidence="9">
    <location>
        <position position="64"/>
    </location>
</feature>
<feature type="lipid moiety-binding region" description="(Microbial infection) N6-stearoyl lysine" evidence="9">
    <location>
        <position position="68"/>
    </location>
</feature>
<feature type="mutagenesis site" description="Abolished stearoylation in response to S.flexneri infection." evidence="9">
    <original>KVARK</original>
    <variation>RVARR</variation>
    <location>
        <begin position="64"/>
        <end position="68"/>
    </location>
</feature>
<feature type="mutagenesis site" description="Does not affect stearoylation in response to S.flexneri infection." evidence="9">
    <original>K</original>
    <variation>R</variation>
    <location>
        <position position="72"/>
    </location>
</feature>
<feature type="sequence conflict" description="In Ref. 1; AAC08434." evidence="17" ref="1">
    <original>R</original>
    <variation>L</variation>
    <location>
        <position position="12"/>
    </location>
</feature>
<feature type="sequence conflict" description="In Ref. 3; CAG33276." evidence="17" ref="3">
    <original>C</original>
    <variation>R</variation>
    <location>
        <position position="81"/>
    </location>
</feature>
<feature type="helix" evidence="21">
    <location>
        <begin position="12"/>
        <end position="72"/>
    </location>
</feature>